<evidence type="ECO:0000250" key="1"/>
<evidence type="ECO:0000255" key="2">
    <source>
        <dbReference type="PROSITE-ProRule" id="PRU00609"/>
    </source>
</evidence>
<evidence type="ECO:0000269" key="3">
    <source>
    </source>
</evidence>
<evidence type="ECO:0000269" key="4">
    <source>
    </source>
</evidence>
<evidence type="ECO:0000305" key="5">
    <source>
    </source>
</evidence>
<dbReference type="EC" id="6.3.5.4"/>
<dbReference type="EMBL" id="L29083">
    <property type="protein sequence ID" value="AAA74359.1"/>
    <property type="molecule type" value="mRNA"/>
</dbReference>
<dbReference type="EMBL" id="AL096860">
    <property type="protein sequence ID" value="CAB51206.1"/>
    <property type="molecule type" value="Genomic_DNA"/>
</dbReference>
<dbReference type="EMBL" id="CP002686">
    <property type="protein sequence ID" value="AEE78264.1"/>
    <property type="molecule type" value="Genomic_DNA"/>
</dbReference>
<dbReference type="EMBL" id="AF419557">
    <property type="protein sequence ID" value="AAL31889.1"/>
    <property type="molecule type" value="mRNA"/>
</dbReference>
<dbReference type="EMBL" id="AY072214">
    <property type="protein sequence ID" value="AAL60035.1"/>
    <property type="molecule type" value="mRNA"/>
</dbReference>
<dbReference type="EMBL" id="AY096592">
    <property type="protein sequence ID" value="AAM20242.1"/>
    <property type="molecule type" value="mRNA"/>
</dbReference>
<dbReference type="PIR" id="T12989">
    <property type="entry name" value="T12989"/>
</dbReference>
<dbReference type="RefSeq" id="NP_190318.1">
    <molecule id="P49078-1"/>
    <property type="nucleotide sequence ID" value="NM_114602.4"/>
</dbReference>
<dbReference type="SMR" id="P49078"/>
<dbReference type="FunCoup" id="P49078">
    <property type="interactions" value="1181"/>
</dbReference>
<dbReference type="STRING" id="3702.P49078"/>
<dbReference type="PaxDb" id="3702-AT3G47340.1"/>
<dbReference type="ProteomicsDB" id="246521">
    <molecule id="P49078-1"/>
</dbReference>
<dbReference type="EnsemblPlants" id="AT3G47340.1">
    <molecule id="P49078-1"/>
    <property type="protein sequence ID" value="AT3G47340.1"/>
    <property type="gene ID" value="AT3G47340"/>
</dbReference>
<dbReference type="GeneID" id="823888"/>
<dbReference type="Gramene" id="AT3G47340.1">
    <molecule id="P49078-1"/>
    <property type="protein sequence ID" value="AT3G47340.1"/>
    <property type="gene ID" value="AT3G47340"/>
</dbReference>
<dbReference type="KEGG" id="ath:AT3G47340"/>
<dbReference type="Araport" id="AT3G47340"/>
<dbReference type="TAIR" id="AT3G47340">
    <property type="gene designation" value="ASN1"/>
</dbReference>
<dbReference type="eggNOG" id="KOG0571">
    <property type="taxonomic scope" value="Eukaryota"/>
</dbReference>
<dbReference type="InParanoid" id="P49078"/>
<dbReference type="PhylomeDB" id="P49078"/>
<dbReference type="UniPathway" id="UPA00134">
    <property type="reaction ID" value="UER00195"/>
</dbReference>
<dbReference type="PRO" id="PR:P49078"/>
<dbReference type="Proteomes" id="UP000006548">
    <property type="component" value="Chromosome 3"/>
</dbReference>
<dbReference type="ExpressionAtlas" id="P49078">
    <property type="expression patterns" value="baseline and differential"/>
</dbReference>
<dbReference type="GO" id="GO:0005829">
    <property type="term" value="C:cytosol"/>
    <property type="evidence" value="ECO:0007005"/>
    <property type="project" value="TAIR"/>
</dbReference>
<dbReference type="GO" id="GO:0004066">
    <property type="term" value="F:asparagine synthase (glutamine-hydrolyzing) activity"/>
    <property type="evidence" value="ECO:0000250"/>
    <property type="project" value="TAIR"/>
</dbReference>
<dbReference type="GO" id="GO:0005524">
    <property type="term" value="F:ATP binding"/>
    <property type="evidence" value="ECO:0007669"/>
    <property type="project" value="UniProtKB-KW"/>
</dbReference>
<dbReference type="GO" id="GO:0009063">
    <property type="term" value="P:amino acid catabolic process"/>
    <property type="evidence" value="ECO:0000304"/>
    <property type="project" value="TAIR"/>
</dbReference>
<dbReference type="GO" id="GO:0006529">
    <property type="term" value="P:asparagine biosynthetic process"/>
    <property type="evidence" value="ECO:0000316"/>
    <property type="project" value="UniProtKB"/>
</dbReference>
<dbReference type="GO" id="GO:0043617">
    <property type="term" value="P:cellular response to sucrose starvation"/>
    <property type="evidence" value="ECO:0000270"/>
    <property type="project" value="TAIR"/>
</dbReference>
<dbReference type="GO" id="GO:0070981">
    <property type="term" value="P:L-asparagine biosynthetic process"/>
    <property type="evidence" value="ECO:0007669"/>
    <property type="project" value="UniProtKB-UniPathway"/>
</dbReference>
<dbReference type="GO" id="GO:0009646">
    <property type="term" value="P:response to absence of light"/>
    <property type="evidence" value="ECO:0000304"/>
    <property type="project" value="TAIR"/>
</dbReference>
<dbReference type="GO" id="GO:0009750">
    <property type="term" value="P:response to fructose"/>
    <property type="evidence" value="ECO:0000270"/>
    <property type="project" value="TAIR"/>
</dbReference>
<dbReference type="GO" id="GO:0009749">
    <property type="term" value="P:response to glucose"/>
    <property type="evidence" value="ECO:0000270"/>
    <property type="project" value="TAIR"/>
</dbReference>
<dbReference type="GO" id="GO:0009744">
    <property type="term" value="P:response to sucrose"/>
    <property type="evidence" value="ECO:0000270"/>
    <property type="project" value="TAIR"/>
</dbReference>
<dbReference type="CDD" id="cd01991">
    <property type="entry name" value="Asn_synthase_B_C"/>
    <property type="match status" value="1"/>
</dbReference>
<dbReference type="CDD" id="cd00712">
    <property type="entry name" value="AsnB"/>
    <property type="match status" value="1"/>
</dbReference>
<dbReference type="FunFam" id="3.40.50.620:FF:000055">
    <property type="entry name" value="Asparagine synthetase [glutamine-hydrolyzing]"/>
    <property type="match status" value="1"/>
</dbReference>
<dbReference type="FunFam" id="3.60.20.10:FF:000024">
    <property type="entry name" value="Asparagine synthetase [glutamine-hydrolyzing]"/>
    <property type="match status" value="1"/>
</dbReference>
<dbReference type="Gene3D" id="3.60.20.10">
    <property type="entry name" value="Glutamine Phosphoribosylpyrophosphate, subunit 1, domain 1"/>
    <property type="match status" value="1"/>
</dbReference>
<dbReference type="Gene3D" id="3.40.50.620">
    <property type="entry name" value="HUPs"/>
    <property type="match status" value="1"/>
</dbReference>
<dbReference type="InterPro" id="IPR006426">
    <property type="entry name" value="Asn_synth_AEB"/>
</dbReference>
<dbReference type="InterPro" id="IPR001962">
    <property type="entry name" value="Asn_synthase"/>
</dbReference>
<dbReference type="InterPro" id="IPR050795">
    <property type="entry name" value="Asn_Synthetase"/>
</dbReference>
<dbReference type="InterPro" id="IPR033738">
    <property type="entry name" value="AsnB_N"/>
</dbReference>
<dbReference type="InterPro" id="IPR017932">
    <property type="entry name" value="GATase_2_dom"/>
</dbReference>
<dbReference type="InterPro" id="IPR029055">
    <property type="entry name" value="Ntn_hydrolases_N"/>
</dbReference>
<dbReference type="InterPro" id="IPR014729">
    <property type="entry name" value="Rossmann-like_a/b/a_fold"/>
</dbReference>
<dbReference type="NCBIfam" id="TIGR01536">
    <property type="entry name" value="asn_synth_AEB"/>
    <property type="match status" value="1"/>
</dbReference>
<dbReference type="NCBIfam" id="NF006949">
    <property type="entry name" value="PRK09431.1"/>
    <property type="match status" value="1"/>
</dbReference>
<dbReference type="PANTHER" id="PTHR11772">
    <property type="entry name" value="ASPARAGINE SYNTHETASE"/>
    <property type="match status" value="1"/>
</dbReference>
<dbReference type="PANTHER" id="PTHR11772:SF48">
    <property type="entry name" value="ASPARAGINE SYNTHETASE [GLUTAMINE-HYDROLYZING] 1"/>
    <property type="match status" value="1"/>
</dbReference>
<dbReference type="Pfam" id="PF00733">
    <property type="entry name" value="Asn_synthase"/>
    <property type="match status" value="1"/>
</dbReference>
<dbReference type="Pfam" id="PF13537">
    <property type="entry name" value="GATase_7"/>
    <property type="match status" value="1"/>
</dbReference>
<dbReference type="PIRSF" id="PIRSF001589">
    <property type="entry name" value="Asn_synthetase_glu-h"/>
    <property type="match status" value="1"/>
</dbReference>
<dbReference type="SUPFAM" id="SSF52402">
    <property type="entry name" value="Adenine nucleotide alpha hydrolases-like"/>
    <property type="match status" value="1"/>
</dbReference>
<dbReference type="SUPFAM" id="SSF56235">
    <property type="entry name" value="N-terminal nucleophile aminohydrolases (Ntn hydrolases)"/>
    <property type="match status" value="1"/>
</dbReference>
<dbReference type="PROSITE" id="PS51278">
    <property type="entry name" value="GATASE_TYPE_2"/>
    <property type="match status" value="1"/>
</dbReference>
<feature type="initiator methionine" description="Removed" evidence="1">
    <location>
        <position position="1"/>
    </location>
</feature>
<feature type="chain" id="PRO_0000056919" description="Asparagine synthetase [glutamine-hydrolyzing] 1">
    <location>
        <begin position="2"/>
        <end position="584"/>
    </location>
</feature>
<feature type="domain" description="Glutamine amidotransferase type-2" evidence="2">
    <location>
        <begin position="2"/>
        <end position="185"/>
    </location>
</feature>
<feature type="domain" description="Asparagine synthetase">
    <location>
        <begin position="193"/>
        <end position="516"/>
    </location>
</feature>
<feature type="active site" description="For GATase activity" evidence="1">
    <location>
        <position position="2"/>
    </location>
</feature>
<feature type="binding site" evidence="1">
    <location>
        <begin position="50"/>
        <end position="54"/>
    </location>
    <ligand>
        <name>L-glutamine</name>
        <dbReference type="ChEBI" id="CHEBI:58359"/>
    </ligand>
</feature>
<feature type="binding site" evidence="1">
    <location>
        <begin position="75"/>
        <end position="77"/>
    </location>
    <ligand>
        <name>L-glutamine</name>
        <dbReference type="ChEBI" id="CHEBI:58359"/>
    </ligand>
</feature>
<feature type="binding site" evidence="1">
    <location>
        <position position="98"/>
    </location>
    <ligand>
        <name>L-glutamine</name>
        <dbReference type="ChEBI" id="CHEBI:58359"/>
    </ligand>
</feature>
<feature type="binding site" evidence="1">
    <location>
        <position position="231"/>
    </location>
    <ligand>
        <name>ATP</name>
        <dbReference type="ChEBI" id="CHEBI:30616"/>
    </ligand>
</feature>
<feature type="binding site" evidence="1">
    <location>
        <position position="267"/>
    </location>
    <ligand>
        <name>ATP</name>
        <dbReference type="ChEBI" id="CHEBI:30616"/>
    </ligand>
</feature>
<feature type="binding site" evidence="1">
    <location>
        <begin position="341"/>
        <end position="342"/>
    </location>
    <ligand>
        <name>ATP</name>
        <dbReference type="ChEBI" id="CHEBI:30616"/>
    </ligand>
</feature>
<feature type="site" description="Important for beta-aspartyl-AMP intermediate formation" evidence="1">
    <location>
        <position position="343"/>
    </location>
</feature>
<name>ASNS1_ARATH</name>
<sequence>MCGILAVLGCSDDSQAKRVRVLELSRRLRHRGPDWSGLYQNGDNYLAHQRLAVIDPASGDQPLFNEDKTIVVTVNGEIYNHEELRKRLKNHKFRTGSDCEVIAHLYEEYGVDFVDMLDGIFSFVLLDTRDNSFMVARDAIGVTSLYIGWGLDGSVWISSEMKGLNDDCEHFETFPPGHFYSSKLGGFKQWYNPPWFNESVPSTPYEPLAIRRAFENAVIKRLMTDVPFGVLLSGGLDSSLVASITARHLAGTKAAKQWGPQLHSFCVGLEGSPDLKAGKEVAEYLGTVHHEFHFSVQDGIDAIEDVIYHVETYDVTTIRASTPMFLMSRKIKSLGVKMVLSGEGADEIFGGYLYFHKAPNKKEFHQETCRKIKALHKYDCLRANKSTSAFGLEARVPFLDKDFINTAMSLDPESKMIKPEEGRIEKWVLRRAFDDEERPYLPKHILYRQKEQFSDGVGYSWIDGLKDHAAQNVNDKMMSNAGHIFPHNTPNTKEAYYYRMIFERFFPQNSARLTVPGGATVACSTAKAVEWDASWSNNMDPSGRAAIGVHLSAYDGKNVALTIPPLKAIDNMPMMMGQGVVIQS</sequence>
<proteinExistence type="evidence at transcript level"/>
<reference key="1">
    <citation type="journal article" date="1994" name="Plant Physiol.">
        <title>Metabolic regulation of the gene encoding glutamine-dependent asparagine synthetase in Arabidopsis thaliana.</title>
        <authorList>
            <person name="Lam H.M."/>
            <person name="Peng S.S."/>
            <person name="Coruzzi G.M."/>
        </authorList>
    </citation>
    <scope>NUCLEOTIDE SEQUENCE [MRNA]</scope>
    <source>
        <strain>cv. Columbia</strain>
    </source>
</reference>
<reference key="2">
    <citation type="journal article" date="2000" name="Nature">
        <title>Sequence and analysis of chromosome 3 of the plant Arabidopsis thaliana.</title>
        <authorList>
            <person name="Salanoubat M."/>
            <person name="Lemcke K."/>
            <person name="Rieger M."/>
            <person name="Ansorge W."/>
            <person name="Unseld M."/>
            <person name="Fartmann B."/>
            <person name="Valle G."/>
            <person name="Bloecker H."/>
            <person name="Perez-Alonso M."/>
            <person name="Obermaier B."/>
            <person name="Delseny M."/>
            <person name="Boutry M."/>
            <person name="Grivell L.A."/>
            <person name="Mache R."/>
            <person name="Puigdomenech P."/>
            <person name="De Simone V."/>
            <person name="Choisne N."/>
            <person name="Artiguenave F."/>
            <person name="Robert C."/>
            <person name="Brottier P."/>
            <person name="Wincker P."/>
            <person name="Cattolico L."/>
            <person name="Weissenbach J."/>
            <person name="Saurin W."/>
            <person name="Quetier F."/>
            <person name="Schaefer M."/>
            <person name="Mueller-Auer S."/>
            <person name="Gabel C."/>
            <person name="Fuchs M."/>
            <person name="Benes V."/>
            <person name="Wurmbach E."/>
            <person name="Drzonek H."/>
            <person name="Erfle H."/>
            <person name="Jordan N."/>
            <person name="Bangert S."/>
            <person name="Wiedelmann R."/>
            <person name="Kranz H."/>
            <person name="Voss H."/>
            <person name="Holland R."/>
            <person name="Brandt P."/>
            <person name="Nyakatura G."/>
            <person name="Vezzi A."/>
            <person name="D'Angelo M."/>
            <person name="Pallavicini A."/>
            <person name="Toppo S."/>
            <person name="Simionati B."/>
            <person name="Conrad A."/>
            <person name="Hornischer K."/>
            <person name="Kauer G."/>
            <person name="Loehnert T.-H."/>
            <person name="Nordsiek G."/>
            <person name="Reichelt J."/>
            <person name="Scharfe M."/>
            <person name="Schoen O."/>
            <person name="Bargues M."/>
            <person name="Terol J."/>
            <person name="Climent J."/>
            <person name="Navarro P."/>
            <person name="Collado C."/>
            <person name="Perez-Perez A."/>
            <person name="Ottenwaelder B."/>
            <person name="Duchemin D."/>
            <person name="Cooke R."/>
            <person name="Laudie M."/>
            <person name="Berger-Llauro C."/>
            <person name="Purnelle B."/>
            <person name="Masuy D."/>
            <person name="de Haan M."/>
            <person name="Maarse A.C."/>
            <person name="Alcaraz J.-P."/>
            <person name="Cottet A."/>
            <person name="Casacuberta E."/>
            <person name="Monfort A."/>
            <person name="Argiriou A."/>
            <person name="Flores M."/>
            <person name="Liguori R."/>
            <person name="Vitale D."/>
            <person name="Mannhaupt G."/>
            <person name="Haase D."/>
            <person name="Schoof H."/>
            <person name="Rudd S."/>
            <person name="Zaccaria P."/>
            <person name="Mewes H.-W."/>
            <person name="Mayer K.F.X."/>
            <person name="Kaul S."/>
            <person name="Town C.D."/>
            <person name="Koo H.L."/>
            <person name="Tallon L.J."/>
            <person name="Jenkins J."/>
            <person name="Rooney T."/>
            <person name="Rizzo M."/>
            <person name="Walts A."/>
            <person name="Utterback T."/>
            <person name="Fujii C.Y."/>
            <person name="Shea T.P."/>
            <person name="Creasy T.H."/>
            <person name="Haas B."/>
            <person name="Maiti R."/>
            <person name="Wu D."/>
            <person name="Peterson J."/>
            <person name="Van Aken S."/>
            <person name="Pai G."/>
            <person name="Militscher J."/>
            <person name="Sellers P."/>
            <person name="Gill J.E."/>
            <person name="Feldblyum T.V."/>
            <person name="Preuss D."/>
            <person name="Lin X."/>
            <person name="Nierman W.C."/>
            <person name="Salzberg S.L."/>
            <person name="White O."/>
            <person name="Venter J.C."/>
            <person name="Fraser C.M."/>
            <person name="Kaneko T."/>
            <person name="Nakamura Y."/>
            <person name="Sato S."/>
            <person name="Kato T."/>
            <person name="Asamizu E."/>
            <person name="Sasamoto S."/>
            <person name="Kimura T."/>
            <person name="Idesawa K."/>
            <person name="Kawashima K."/>
            <person name="Kishida Y."/>
            <person name="Kiyokawa C."/>
            <person name="Kohara M."/>
            <person name="Matsumoto M."/>
            <person name="Matsuno A."/>
            <person name="Muraki A."/>
            <person name="Nakayama S."/>
            <person name="Nakazaki N."/>
            <person name="Shinpo S."/>
            <person name="Takeuchi C."/>
            <person name="Wada T."/>
            <person name="Watanabe A."/>
            <person name="Yamada M."/>
            <person name="Yasuda M."/>
            <person name="Tabata S."/>
        </authorList>
    </citation>
    <scope>NUCLEOTIDE SEQUENCE [LARGE SCALE GENOMIC DNA]</scope>
    <source>
        <strain>cv. Columbia</strain>
    </source>
</reference>
<reference key="3">
    <citation type="journal article" date="2017" name="Plant J.">
        <title>Araport11: a complete reannotation of the Arabidopsis thaliana reference genome.</title>
        <authorList>
            <person name="Cheng C.Y."/>
            <person name="Krishnakumar V."/>
            <person name="Chan A.P."/>
            <person name="Thibaud-Nissen F."/>
            <person name="Schobel S."/>
            <person name="Town C.D."/>
        </authorList>
    </citation>
    <scope>GENOME REANNOTATION</scope>
    <source>
        <strain>cv. Columbia</strain>
    </source>
</reference>
<reference key="4">
    <citation type="journal article" date="2003" name="Science">
        <title>Empirical analysis of transcriptional activity in the Arabidopsis genome.</title>
        <authorList>
            <person name="Yamada K."/>
            <person name="Lim J."/>
            <person name="Dale J.M."/>
            <person name="Chen H."/>
            <person name="Shinn P."/>
            <person name="Palm C.J."/>
            <person name="Southwick A.M."/>
            <person name="Wu H.C."/>
            <person name="Kim C.J."/>
            <person name="Nguyen M."/>
            <person name="Pham P.K."/>
            <person name="Cheuk R.F."/>
            <person name="Karlin-Newmann G."/>
            <person name="Liu S.X."/>
            <person name="Lam B."/>
            <person name="Sakano H."/>
            <person name="Wu T."/>
            <person name="Yu G."/>
            <person name="Miranda M."/>
            <person name="Quach H.L."/>
            <person name="Tripp M."/>
            <person name="Chang C.H."/>
            <person name="Lee J.M."/>
            <person name="Toriumi M.J."/>
            <person name="Chan M.M."/>
            <person name="Tang C.C."/>
            <person name="Onodera C.S."/>
            <person name="Deng J.M."/>
            <person name="Akiyama K."/>
            <person name="Ansari Y."/>
            <person name="Arakawa T."/>
            <person name="Banh J."/>
            <person name="Banno F."/>
            <person name="Bowser L."/>
            <person name="Brooks S.Y."/>
            <person name="Carninci P."/>
            <person name="Chao Q."/>
            <person name="Choy N."/>
            <person name="Enju A."/>
            <person name="Goldsmith A.D."/>
            <person name="Gurjal M."/>
            <person name="Hansen N.F."/>
            <person name="Hayashizaki Y."/>
            <person name="Johnson-Hopson C."/>
            <person name="Hsuan V.W."/>
            <person name="Iida K."/>
            <person name="Karnes M."/>
            <person name="Khan S."/>
            <person name="Koesema E."/>
            <person name="Ishida J."/>
            <person name="Jiang P.X."/>
            <person name="Jones T."/>
            <person name="Kawai J."/>
            <person name="Kamiya A."/>
            <person name="Meyers C."/>
            <person name="Nakajima M."/>
            <person name="Narusaka M."/>
            <person name="Seki M."/>
            <person name="Sakurai T."/>
            <person name="Satou M."/>
            <person name="Tamse R."/>
            <person name="Vaysberg M."/>
            <person name="Wallender E.K."/>
            <person name="Wong C."/>
            <person name="Yamamura Y."/>
            <person name="Yuan S."/>
            <person name="Shinozaki K."/>
            <person name="Davis R.W."/>
            <person name="Theologis A."/>
            <person name="Ecker J.R."/>
        </authorList>
    </citation>
    <scope>NUCLEOTIDE SEQUENCE [LARGE SCALE MRNA]</scope>
    <source>
        <strain>cv. Columbia</strain>
    </source>
</reference>
<reference key="5">
    <citation type="journal article" date="1998" name="Plant J.">
        <title>Reciprocal regulation of distinct asparagine synthetase genes by light and metabolites in Arabidopsis thaliana.</title>
        <authorList>
            <person name="Lam H.M."/>
            <person name="Hsieh M.H."/>
            <person name="Coruzzi G."/>
        </authorList>
    </citation>
    <scope>TISSUE SPECIFICITY</scope>
    <scope>INDUCTION</scope>
</reference>
<reference key="6">
    <citation type="journal article" date="2003" name="Plant Physiol.">
        <title>Overexpression of the ASN1 gene enhances nitrogen status in seeds of Arabidopsis.</title>
        <authorList>
            <person name="Lam H.M."/>
            <person name="Wong P."/>
            <person name="Chan H.K."/>
            <person name="Yam K.M."/>
            <person name="Chen L."/>
            <person name="Chow C.M."/>
            <person name="Coruzzi G.M."/>
        </authorList>
    </citation>
    <scope>FUNCTION</scope>
</reference>
<comment type="function">
    <text evidence="3">Essential for nitrogen assimilation, distribution and remobilization within the plant via the phloem.</text>
</comment>
<comment type="catalytic activity">
    <reaction>
        <text>L-aspartate + L-glutamine + ATP + H2O = L-asparagine + L-glutamate + AMP + diphosphate + H(+)</text>
        <dbReference type="Rhea" id="RHEA:12228"/>
        <dbReference type="ChEBI" id="CHEBI:15377"/>
        <dbReference type="ChEBI" id="CHEBI:15378"/>
        <dbReference type="ChEBI" id="CHEBI:29985"/>
        <dbReference type="ChEBI" id="CHEBI:29991"/>
        <dbReference type="ChEBI" id="CHEBI:30616"/>
        <dbReference type="ChEBI" id="CHEBI:33019"/>
        <dbReference type="ChEBI" id="CHEBI:58048"/>
        <dbReference type="ChEBI" id="CHEBI:58359"/>
        <dbReference type="ChEBI" id="CHEBI:456215"/>
        <dbReference type="EC" id="6.3.5.4"/>
    </reaction>
</comment>
<comment type="pathway">
    <text>Amino-acid biosynthesis; L-asparagine biosynthesis; L-asparagine from L-aspartate (L-Gln route): step 1/1.</text>
</comment>
<comment type="alternative products">
    <event type="alternative splicing"/>
    <isoform>
        <id>P49078-1</id>
        <name>1</name>
        <sequence type="displayed"/>
    </isoform>
    <text>A number of isoforms are produced. According to EST sequences.</text>
</comment>
<comment type="induction">
    <text evidence="4">By dark. Down-regulated by light and sucrose.</text>
</comment>
<comment type="miscellaneous">
    <text evidence="5">Plants over-expressing ASN1 have increased content of free amino acids (mainly Asn) in flowers, siliques and seeds.</text>
</comment>
<gene>
    <name type="primary">ASN1</name>
    <name type="synonym">DIN6</name>
    <name type="ordered locus">At3g47340</name>
    <name type="ORF">T21L8.90</name>
</gene>
<organism>
    <name type="scientific">Arabidopsis thaliana</name>
    <name type="common">Mouse-ear cress</name>
    <dbReference type="NCBI Taxonomy" id="3702"/>
    <lineage>
        <taxon>Eukaryota</taxon>
        <taxon>Viridiplantae</taxon>
        <taxon>Streptophyta</taxon>
        <taxon>Embryophyta</taxon>
        <taxon>Tracheophyta</taxon>
        <taxon>Spermatophyta</taxon>
        <taxon>Magnoliopsida</taxon>
        <taxon>eudicotyledons</taxon>
        <taxon>Gunneridae</taxon>
        <taxon>Pentapetalae</taxon>
        <taxon>rosids</taxon>
        <taxon>malvids</taxon>
        <taxon>Brassicales</taxon>
        <taxon>Brassicaceae</taxon>
        <taxon>Camelineae</taxon>
        <taxon>Arabidopsis</taxon>
    </lineage>
</organism>
<protein>
    <recommendedName>
        <fullName>Asparagine synthetase [glutamine-hydrolyzing] 1</fullName>
        <ecNumber>6.3.5.4</ecNumber>
    </recommendedName>
    <alternativeName>
        <fullName>Glutamine-dependent asparagine synthetase 1</fullName>
    </alternativeName>
    <alternativeName>
        <fullName>Protein DARK INDUCIBLE 6</fullName>
    </alternativeName>
</protein>
<keyword id="KW-0025">Alternative splicing</keyword>
<keyword id="KW-0028">Amino-acid biosynthesis</keyword>
<keyword id="KW-0061">Asparagine biosynthesis</keyword>
<keyword id="KW-0067">ATP-binding</keyword>
<keyword id="KW-0315">Glutamine amidotransferase</keyword>
<keyword id="KW-0436">Ligase</keyword>
<keyword id="KW-0547">Nucleotide-binding</keyword>
<keyword id="KW-1185">Reference proteome</keyword>
<accession>P49078</accession>